<name>URED_YERPB</name>
<organism>
    <name type="scientific">Yersinia pseudotuberculosis serotype IB (strain PB1/+)</name>
    <dbReference type="NCBI Taxonomy" id="502801"/>
    <lineage>
        <taxon>Bacteria</taxon>
        <taxon>Pseudomonadati</taxon>
        <taxon>Pseudomonadota</taxon>
        <taxon>Gammaproteobacteria</taxon>
        <taxon>Enterobacterales</taxon>
        <taxon>Yersiniaceae</taxon>
        <taxon>Yersinia</taxon>
    </lineage>
</organism>
<evidence type="ECO:0000255" key="1">
    <source>
        <dbReference type="HAMAP-Rule" id="MF_01384"/>
    </source>
</evidence>
<reference key="1">
    <citation type="submission" date="2008-04" db="EMBL/GenBank/DDBJ databases">
        <title>Complete sequence of Yersinia pseudotuberculosis PB1/+.</title>
        <authorList>
            <person name="Copeland A."/>
            <person name="Lucas S."/>
            <person name="Lapidus A."/>
            <person name="Glavina del Rio T."/>
            <person name="Dalin E."/>
            <person name="Tice H."/>
            <person name="Bruce D."/>
            <person name="Goodwin L."/>
            <person name="Pitluck S."/>
            <person name="Munk A.C."/>
            <person name="Brettin T."/>
            <person name="Detter J.C."/>
            <person name="Han C."/>
            <person name="Tapia R."/>
            <person name="Schmutz J."/>
            <person name="Larimer F."/>
            <person name="Land M."/>
            <person name="Hauser L."/>
            <person name="Challacombe J.F."/>
            <person name="Green L."/>
            <person name="Lindler L.E."/>
            <person name="Nikolich M.P."/>
            <person name="Richardson P."/>
        </authorList>
    </citation>
    <scope>NUCLEOTIDE SEQUENCE [LARGE SCALE GENOMIC DNA]</scope>
    <source>
        <strain>PB1/+</strain>
    </source>
</reference>
<proteinExistence type="inferred from homology"/>
<gene>
    <name evidence="1" type="primary">ureD</name>
    <name type="ordered locus">YPTS_3054</name>
</gene>
<feature type="chain" id="PRO_1000145103" description="Urease accessory protein UreD">
    <location>
        <begin position="1"/>
        <end position="321"/>
    </location>
</feature>
<sequence length="321" mass="35704">MTAQSQNIVETPSRVRAHALGVNAPELAKYQDEPAQMRSGAVGKSGYLKLRFAKREHRSILAEMERRVPSLVQKALYWDEEIPELPCVTMISTSGCILQGDRLATDVHVEAGACAHVTTQSATKVHMMNANYASQIQNFIVEEGGYLEFMPDPLIPHRNSRFITDTTISIHPTATAIYSEVLMSGRKYHHADERFGFDVYSSRVAAQNLAGKELFVEKYVLEPKVESLDAVGVMQTFDAFGNVILLTPKEHHDRILARVPAHFDIKGGIASGATRLPNDCGLVFKALGIDSAGVKAEIRQFWKIAREEILGVTLPEQFLWR</sequence>
<accession>B2KAA0</accession>
<protein>
    <recommendedName>
        <fullName evidence="1">Urease accessory protein UreD</fullName>
    </recommendedName>
</protein>
<keyword id="KW-0143">Chaperone</keyword>
<keyword id="KW-0963">Cytoplasm</keyword>
<keyword id="KW-0996">Nickel insertion</keyword>
<comment type="function">
    <text evidence="1">Required for maturation of urease via the functional incorporation of the urease nickel metallocenter.</text>
</comment>
<comment type="subunit">
    <text evidence="1">UreD, UreF and UreG form a complex that acts as a GTP-hydrolysis-dependent molecular chaperone, activating the urease apoprotein by helping to assemble the nickel containing metallocenter of UreC. The UreE protein probably delivers the nickel.</text>
</comment>
<comment type="subcellular location">
    <subcellularLocation>
        <location evidence="1">Cytoplasm</location>
    </subcellularLocation>
</comment>
<comment type="similarity">
    <text evidence="1">Belongs to the UreD family.</text>
</comment>
<dbReference type="EMBL" id="CP001048">
    <property type="protein sequence ID" value="ACC90011.1"/>
    <property type="molecule type" value="Genomic_DNA"/>
</dbReference>
<dbReference type="RefSeq" id="WP_011192842.1">
    <property type="nucleotide sequence ID" value="NZ_CP009780.1"/>
</dbReference>
<dbReference type="SMR" id="B2KAA0"/>
<dbReference type="KEGG" id="ypb:YPTS_3054"/>
<dbReference type="PATRIC" id="fig|502801.10.peg.2486"/>
<dbReference type="GO" id="GO:0005737">
    <property type="term" value="C:cytoplasm"/>
    <property type="evidence" value="ECO:0007669"/>
    <property type="project" value="UniProtKB-SubCell"/>
</dbReference>
<dbReference type="GO" id="GO:0016151">
    <property type="term" value="F:nickel cation binding"/>
    <property type="evidence" value="ECO:0007669"/>
    <property type="project" value="UniProtKB-UniRule"/>
</dbReference>
<dbReference type="HAMAP" id="MF_01384">
    <property type="entry name" value="UreD"/>
    <property type="match status" value="1"/>
</dbReference>
<dbReference type="InterPro" id="IPR002669">
    <property type="entry name" value="UreD"/>
</dbReference>
<dbReference type="PANTHER" id="PTHR33643">
    <property type="entry name" value="UREASE ACCESSORY PROTEIN D"/>
    <property type="match status" value="1"/>
</dbReference>
<dbReference type="PANTHER" id="PTHR33643:SF1">
    <property type="entry name" value="UREASE ACCESSORY PROTEIN D"/>
    <property type="match status" value="1"/>
</dbReference>
<dbReference type="Pfam" id="PF01774">
    <property type="entry name" value="UreD"/>
    <property type="match status" value="1"/>
</dbReference>